<dbReference type="EMBL" id="AF079450">
    <property type="protein sequence ID" value="AAL04425.1"/>
    <property type="molecule type" value="mRNA"/>
</dbReference>
<dbReference type="EMBL" id="X95905">
    <property type="protein sequence ID" value="CAA65150.1"/>
    <property type="molecule type" value="Genomic_DNA"/>
</dbReference>
<dbReference type="RefSeq" id="NP_001234637.1">
    <property type="nucleotide sequence ID" value="NM_001247708.2"/>
</dbReference>
<dbReference type="SMR" id="P93212"/>
<dbReference type="BioGRID" id="2310624">
    <property type="interactions" value="10"/>
</dbReference>
<dbReference type="FunCoup" id="P93212">
    <property type="interactions" value="246"/>
</dbReference>
<dbReference type="MINT" id="P93212"/>
<dbReference type="STRING" id="4081.P93212"/>
<dbReference type="PaxDb" id="4081-Solyc04g074230.2.1"/>
<dbReference type="GeneID" id="544213"/>
<dbReference type="KEGG" id="sly:544213"/>
<dbReference type="eggNOG" id="KOG0841">
    <property type="taxonomic scope" value="Eukaryota"/>
</dbReference>
<dbReference type="InParanoid" id="P93212"/>
<dbReference type="OrthoDB" id="10260625at2759"/>
<dbReference type="Proteomes" id="UP000004994">
    <property type="component" value="Unplaced"/>
</dbReference>
<dbReference type="ExpressionAtlas" id="P93212">
    <property type="expression patterns" value="baseline and differential"/>
</dbReference>
<dbReference type="GO" id="GO:0005737">
    <property type="term" value="C:cytoplasm"/>
    <property type="evidence" value="ECO:0000318"/>
    <property type="project" value="GO_Central"/>
</dbReference>
<dbReference type="GO" id="GO:0008104">
    <property type="term" value="P:protein localization"/>
    <property type="evidence" value="ECO:0000318"/>
    <property type="project" value="GO_Central"/>
</dbReference>
<dbReference type="GO" id="GO:0007165">
    <property type="term" value="P:signal transduction"/>
    <property type="evidence" value="ECO:0000318"/>
    <property type="project" value="GO_Central"/>
</dbReference>
<dbReference type="FunFam" id="1.20.190.20:FF:000002">
    <property type="entry name" value="14-3-3 protein epsilon"/>
    <property type="match status" value="1"/>
</dbReference>
<dbReference type="Gene3D" id="1.20.190.20">
    <property type="entry name" value="14-3-3 domain"/>
    <property type="match status" value="1"/>
</dbReference>
<dbReference type="InterPro" id="IPR000308">
    <property type="entry name" value="14-3-3"/>
</dbReference>
<dbReference type="InterPro" id="IPR023409">
    <property type="entry name" value="14-3-3_CS"/>
</dbReference>
<dbReference type="InterPro" id="IPR036815">
    <property type="entry name" value="14-3-3_dom_sf"/>
</dbReference>
<dbReference type="InterPro" id="IPR023410">
    <property type="entry name" value="14-3-3_domain"/>
</dbReference>
<dbReference type="PANTHER" id="PTHR18860">
    <property type="entry name" value="14-3-3 PROTEIN"/>
    <property type="match status" value="1"/>
</dbReference>
<dbReference type="Pfam" id="PF00244">
    <property type="entry name" value="14-3-3"/>
    <property type="match status" value="1"/>
</dbReference>
<dbReference type="PIRSF" id="PIRSF000868">
    <property type="entry name" value="14-3-3"/>
    <property type="match status" value="1"/>
</dbReference>
<dbReference type="PRINTS" id="PR00305">
    <property type="entry name" value="1433ZETA"/>
</dbReference>
<dbReference type="SMART" id="SM00101">
    <property type="entry name" value="14_3_3"/>
    <property type="match status" value="1"/>
</dbReference>
<dbReference type="SUPFAM" id="SSF48445">
    <property type="entry name" value="14-3-3 protein"/>
    <property type="match status" value="1"/>
</dbReference>
<dbReference type="PROSITE" id="PS00796">
    <property type="entry name" value="1433_1"/>
    <property type="match status" value="1"/>
</dbReference>
<dbReference type="PROSITE" id="PS00797">
    <property type="entry name" value="1433_2"/>
    <property type="match status" value="1"/>
</dbReference>
<name>14337_SOLLC</name>
<accession>P93212</accession>
<accession>Q947S9</accession>
<keyword id="KW-1185">Reference proteome</keyword>
<sequence>MEKEREKQVYLARLAEQAERYDEMVEAMKAIAKMDVELTVEERNLVSVGYKNVIGARRASWRILSSIEQKEESKGHEQNVKRIKTYRQRVEDELTKICSDILSVIDEHLVPSSTTGESTVFYYKMKGDYYRYLAEFKAGDDRKEASEQSLKAYEAATATASSDLAPTHPIRLGLALNFSVFYYEILNSPERACHLAKQAFDEAIAELDSLSEESYKDSTLIMQLLRDNLTLWTSDLEEGGEHSKGDERQGEN</sequence>
<gene>
    <name type="primary">TFT7</name>
</gene>
<proteinExistence type="evidence at transcript level"/>
<feature type="chain" id="PRO_0000058687" description="14-3-3 protein 7">
    <location>
        <begin position="1"/>
        <end position="252"/>
    </location>
</feature>
<feature type="sequence conflict" description="In Ref. 2; CAA65150." evidence="1" ref="2">
    <original>A</original>
    <variation>L</variation>
    <location>
        <position position="152"/>
    </location>
</feature>
<reference key="1">
    <citation type="journal article" date="2001" name="Plant Cell">
        <title>Tomato SP-interacting proteins define a conserved signaling system that regulates shoot architecture and flowering.</title>
        <authorList>
            <person name="Pnueli L."/>
            <person name="Gutfinger T."/>
            <person name="Hareven D."/>
            <person name="Ben-Naim O."/>
            <person name="Ron N."/>
            <person name="Adir N."/>
            <person name="Lifschitz E."/>
        </authorList>
    </citation>
    <scope>NUCLEOTIDE SEQUENCE [MRNA]</scope>
</reference>
<reference key="2">
    <citation type="journal article" date="1999" name="Plant Physiol.">
        <title>Fusicoccin, 14-3-3 proteins, and defense responses in tomato plants.</title>
        <authorList>
            <person name="Roberts M.R."/>
            <person name="Bowles D.J."/>
        </authorList>
    </citation>
    <scope>NUCLEOTIDE SEQUENCE [GENOMIC DNA]</scope>
    <source>
        <strain>cv. Moneymaker</strain>
        <tissue>Leaf</tissue>
    </source>
</reference>
<comment type="subunit">
    <text evidence="1">Homodimer.</text>
</comment>
<comment type="similarity">
    <text evidence="1">Belongs to the 14-3-3 family.</text>
</comment>
<organism>
    <name type="scientific">Solanum lycopersicum</name>
    <name type="common">Tomato</name>
    <name type="synonym">Lycopersicon esculentum</name>
    <dbReference type="NCBI Taxonomy" id="4081"/>
    <lineage>
        <taxon>Eukaryota</taxon>
        <taxon>Viridiplantae</taxon>
        <taxon>Streptophyta</taxon>
        <taxon>Embryophyta</taxon>
        <taxon>Tracheophyta</taxon>
        <taxon>Spermatophyta</taxon>
        <taxon>Magnoliopsida</taxon>
        <taxon>eudicotyledons</taxon>
        <taxon>Gunneridae</taxon>
        <taxon>Pentapetalae</taxon>
        <taxon>asterids</taxon>
        <taxon>lamiids</taxon>
        <taxon>Solanales</taxon>
        <taxon>Solanaceae</taxon>
        <taxon>Solanoideae</taxon>
        <taxon>Solaneae</taxon>
        <taxon>Solanum</taxon>
        <taxon>Solanum subgen. Lycopersicon</taxon>
    </lineage>
</organism>
<protein>
    <recommendedName>
        <fullName>14-3-3 protein 7</fullName>
    </recommendedName>
</protein>
<evidence type="ECO:0000305" key="1"/>